<sequence length="419" mass="45460">MAVWTLGINHTTAPLDLRGRFAFALDQVEPTLRALRGSLSRQPEAALISTCNRTEIYCAGEKPELEHTLDWLAQTGGVSSSLLRTHSYTLQDDLAARHAFRVASGLDSMVLGETQILGQIKNAVRAAEAAGALGNTLSQLFQRSFAVAKEVRSSTEIGAHSISMAAAAVRLAGQLFEDLGQVKILFVGAGEMIELCATHFAAKSPKAIAIANRSLENGEKLASRFGAEVMRLADLPDRLHEFDAVVSCTASTLPIIGLGAVERALKRRKRRPMFMVDLAVPRDIEIEVKALEDVYLYTVDDLASVVQTAQASRQAAVAQAEAIVDAGVLSFMHWVDQRGSVPLIQQLNAQADEWRAAELARARKLLAKGEDVEAVLEALSKGLTQKMLHGAMTELRASDTAARERASAAIQHFFLRKER</sequence>
<comment type="function">
    <text evidence="1">Catalyzes the NADPH-dependent reduction of glutamyl-tRNA(Glu) to glutamate 1-semialdehyde (GSA).</text>
</comment>
<comment type="catalytic activity">
    <reaction evidence="1">
        <text>(S)-4-amino-5-oxopentanoate + tRNA(Glu) + NADP(+) = L-glutamyl-tRNA(Glu) + NADPH + H(+)</text>
        <dbReference type="Rhea" id="RHEA:12344"/>
        <dbReference type="Rhea" id="RHEA-COMP:9663"/>
        <dbReference type="Rhea" id="RHEA-COMP:9680"/>
        <dbReference type="ChEBI" id="CHEBI:15378"/>
        <dbReference type="ChEBI" id="CHEBI:57501"/>
        <dbReference type="ChEBI" id="CHEBI:57783"/>
        <dbReference type="ChEBI" id="CHEBI:58349"/>
        <dbReference type="ChEBI" id="CHEBI:78442"/>
        <dbReference type="ChEBI" id="CHEBI:78520"/>
        <dbReference type="EC" id="1.2.1.70"/>
    </reaction>
</comment>
<comment type="pathway">
    <text evidence="1">Porphyrin-containing compound metabolism; protoporphyrin-IX biosynthesis; 5-aminolevulinate from L-glutamyl-tRNA(Glu): step 1/2.</text>
</comment>
<comment type="subunit">
    <text evidence="1">Homodimer.</text>
</comment>
<comment type="domain">
    <text evidence="1">Possesses an unusual extended V-shaped dimeric structure with each monomer consisting of three distinct domains arranged along a curved 'spinal' alpha-helix. The N-terminal catalytic domain specifically recognizes the glutamate moiety of the substrate. The second domain is the NADPH-binding domain, and the third C-terminal domain is responsible for dimerization.</text>
</comment>
<comment type="miscellaneous">
    <text evidence="1">During catalysis, the active site Cys acts as a nucleophile attacking the alpha-carbonyl group of tRNA-bound glutamate with the formation of a thioester intermediate between enzyme and glutamate, and the concomitant release of tRNA(Glu). The thioester intermediate is finally reduced by direct hydride transfer from NADPH, to form the product GSA.</text>
</comment>
<comment type="similarity">
    <text evidence="1">Belongs to the glutamyl-tRNA reductase family.</text>
</comment>
<proteinExistence type="inferred from homology"/>
<reference key="1">
    <citation type="submission" date="2006-02" db="EMBL/GenBank/DDBJ databases">
        <title>Complete sequence of chromosome of Rhodoferax ferrireducens DSM 15236.</title>
        <authorList>
            <person name="Copeland A."/>
            <person name="Lucas S."/>
            <person name="Lapidus A."/>
            <person name="Barry K."/>
            <person name="Detter J.C."/>
            <person name="Glavina del Rio T."/>
            <person name="Hammon N."/>
            <person name="Israni S."/>
            <person name="Pitluck S."/>
            <person name="Brettin T."/>
            <person name="Bruce D."/>
            <person name="Han C."/>
            <person name="Tapia R."/>
            <person name="Gilna P."/>
            <person name="Kiss H."/>
            <person name="Schmutz J."/>
            <person name="Larimer F."/>
            <person name="Land M."/>
            <person name="Kyrpides N."/>
            <person name="Ivanova N."/>
            <person name="Richardson P."/>
        </authorList>
    </citation>
    <scope>NUCLEOTIDE SEQUENCE [LARGE SCALE GENOMIC DNA]</scope>
    <source>
        <strain>ATCC BAA-621 / DSM 15236 / T118</strain>
    </source>
</reference>
<keyword id="KW-0521">NADP</keyword>
<keyword id="KW-0560">Oxidoreductase</keyword>
<keyword id="KW-0627">Porphyrin biosynthesis</keyword>
<keyword id="KW-1185">Reference proteome</keyword>
<dbReference type="EC" id="1.2.1.70" evidence="1"/>
<dbReference type="EMBL" id="CP000267">
    <property type="protein sequence ID" value="ABD69015.1"/>
    <property type="molecule type" value="Genomic_DNA"/>
</dbReference>
<dbReference type="RefSeq" id="WP_011463583.1">
    <property type="nucleotide sequence ID" value="NC_007908.1"/>
</dbReference>
<dbReference type="SMR" id="Q21YY8"/>
<dbReference type="STRING" id="338969.Rfer_1281"/>
<dbReference type="KEGG" id="rfr:Rfer_1281"/>
<dbReference type="eggNOG" id="COG0373">
    <property type="taxonomic scope" value="Bacteria"/>
</dbReference>
<dbReference type="HOGENOM" id="CLU_035113_2_2_4"/>
<dbReference type="OrthoDB" id="110209at2"/>
<dbReference type="UniPathway" id="UPA00251">
    <property type="reaction ID" value="UER00316"/>
</dbReference>
<dbReference type="Proteomes" id="UP000008332">
    <property type="component" value="Chromosome"/>
</dbReference>
<dbReference type="GO" id="GO:0008883">
    <property type="term" value="F:glutamyl-tRNA reductase activity"/>
    <property type="evidence" value="ECO:0007669"/>
    <property type="project" value="UniProtKB-UniRule"/>
</dbReference>
<dbReference type="GO" id="GO:0050661">
    <property type="term" value="F:NADP binding"/>
    <property type="evidence" value="ECO:0007669"/>
    <property type="project" value="InterPro"/>
</dbReference>
<dbReference type="GO" id="GO:0019353">
    <property type="term" value="P:protoporphyrinogen IX biosynthetic process from glutamate"/>
    <property type="evidence" value="ECO:0007669"/>
    <property type="project" value="TreeGrafter"/>
</dbReference>
<dbReference type="CDD" id="cd05213">
    <property type="entry name" value="NAD_bind_Glutamyl_tRNA_reduct"/>
    <property type="match status" value="1"/>
</dbReference>
<dbReference type="FunFam" id="3.30.460.30:FF:000001">
    <property type="entry name" value="Glutamyl-tRNA reductase"/>
    <property type="match status" value="1"/>
</dbReference>
<dbReference type="FunFam" id="3.40.50.720:FF:000031">
    <property type="entry name" value="Glutamyl-tRNA reductase"/>
    <property type="match status" value="1"/>
</dbReference>
<dbReference type="Gene3D" id="3.30.460.30">
    <property type="entry name" value="Glutamyl-tRNA reductase, N-terminal domain"/>
    <property type="match status" value="1"/>
</dbReference>
<dbReference type="Gene3D" id="3.40.50.720">
    <property type="entry name" value="NAD(P)-binding Rossmann-like Domain"/>
    <property type="match status" value="1"/>
</dbReference>
<dbReference type="HAMAP" id="MF_00087">
    <property type="entry name" value="Glu_tRNA_reductase"/>
    <property type="match status" value="1"/>
</dbReference>
<dbReference type="InterPro" id="IPR000343">
    <property type="entry name" value="4pyrrol_synth_GluRdtase"/>
</dbReference>
<dbReference type="InterPro" id="IPR015896">
    <property type="entry name" value="4pyrrol_synth_GluRdtase_dimer"/>
</dbReference>
<dbReference type="InterPro" id="IPR015895">
    <property type="entry name" value="4pyrrol_synth_GluRdtase_N"/>
</dbReference>
<dbReference type="InterPro" id="IPR018214">
    <property type="entry name" value="GluRdtase_CS"/>
</dbReference>
<dbReference type="InterPro" id="IPR036453">
    <property type="entry name" value="GluRdtase_dimer_dom_sf"/>
</dbReference>
<dbReference type="InterPro" id="IPR036343">
    <property type="entry name" value="GluRdtase_N_sf"/>
</dbReference>
<dbReference type="InterPro" id="IPR036291">
    <property type="entry name" value="NAD(P)-bd_dom_sf"/>
</dbReference>
<dbReference type="InterPro" id="IPR006151">
    <property type="entry name" value="Shikm_DH/Glu-tRNA_Rdtase"/>
</dbReference>
<dbReference type="NCBIfam" id="TIGR01035">
    <property type="entry name" value="hemA"/>
    <property type="match status" value="1"/>
</dbReference>
<dbReference type="PANTHER" id="PTHR43013">
    <property type="entry name" value="GLUTAMYL-TRNA REDUCTASE"/>
    <property type="match status" value="1"/>
</dbReference>
<dbReference type="PANTHER" id="PTHR43013:SF1">
    <property type="entry name" value="GLUTAMYL-TRNA REDUCTASE"/>
    <property type="match status" value="1"/>
</dbReference>
<dbReference type="Pfam" id="PF00745">
    <property type="entry name" value="GlutR_dimer"/>
    <property type="match status" value="1"/>
</dbReference>
<dbReference type="Pfam" id="PF05201">
    <property type="entry name" value="GlutR_N"/>
    <property type="match status" value="1"/>
</dbReference>
<dbReference type="Pfam" id="PF01488">
    <property type="entry name" value="Shikimate_DH"/>
    <property type="match status" value="1"/>
</dbReference>
<dbReference type="PIRSF" id="PIRSF000445">
    <property type="entry name" value="4pyrrol_synth_GluRdtase"/>
    <property type="match status" value="1"/>
</dbReference>
<dbReference type="SUPFAM" id="SSF69742">
    <property type="entry name" value="Glutamyl tRNA-reductase catalytic, N-terminal domain"/>
    <property type="match status" value="1"/>
</dbReference>
<dbReference type="SUPFAM" id="SSF69075">
    <property type="entry name" value="Glutamyl tRNA-reductase dimerization domain"/>
    <property type="match status" value="1"/>
</dbReference>
<dbReference type="SUPFAM" id="SSF51735">
    <property type="entry name" value="NAD(P)-binding Rossmann-fold domains"/>
    <property type="match status" value="1"/>
</dbReference>
<dbReference type="PROSITE" id="PS00747">
    <property type="entry name" value="GLUTR"/>
    <property type="match status" value="1"/>
</dbReference>
<protein>
    <recommendedName>
        <fullName evidence="1">Glutamyl-tRNA reductase</fullName>
        <shortName evidence="1">GluTR</shortName>
        <ecNumber evidence="1">1.2.1.70</ecNumber>
    </recommendedName>
</protein>
<accession>Q21YY8</accession>
<name>HEM1_ALBFT</name>
<organism>
    <name type="scientific">Albidiferax ferrireducens (strain ATCC BAA-621 / DSM 15236 / T118)</name>
    <name type="common">Rhodoferax ferrireducens</name>
    <dbReference type="NCBI Taxonomy" id="338969"/>
    <lineage>
        <taxon>Bacteria</taxon>
        <taxon>Pseudomonadati</taxon>
        <taxon>Pseudomonadota</taxon>
        <taxon>Betaproteobacteria</taxon>
        <taxon>Burkholderiales</taxon>
        <taxon>Comamonadaceae</taxon>
        <taxon>Rhodoferax</taxon>
    </lineage>
</organism>
<feature type="chain" id="PRO_0000335066" description="Glutamyl-tRNA reductase">
    <location>
        <begin position="1"/>
        <end position="419"/>
    </location>
</feature>
<feature type="active site" description="Nucleophile" evidence="1">
    <location>
        <position position="51"/>
    </location>
</feature>
<feature type="binding site" evidence="1">
    <location>
        <begin position="50"/>
        <end position="53"/>
    </location>
    <ligand>
        <name>substrate</name>
    </ligand>
</feature>
<feature type="binding site" evidence="1">
    <location>
        <position position="108"/>
    </location>
    <ligand>
        <name>substrate</name>
    </ligand>
</feature>
<feature type="binding site" evidence="1">
    <location>
        <begin position="113"/>
        <end position="115"/>
    </location>
    <ligand>
        <name>substrate</name>
    </ligand>
</feature>
<feature type="binding site" evidence="1">
    <location>
        <position position="119"/>
    </location>
    <ligand>
        <name>substrate</name>
    </ligand>
</feature>
<feature type="binding site" evidence="1">
    <location>
        <begin position="188"/>
        <end position="193"/>
    </location>
    <ligand>
        <name>NADP(+)</name>
        <dbReference type="ChEBI" id="CHEBI:58349"/>
    </ligand>
</feature>
<feature type="site" description="Important for activity" evidence="1">
    <location>
        <position position="98"/>
    </location>
</feature>
<evidence type="ECO:0000255" key="1">
    <source>
        <dbReference type="HAMAP-Rule" id="MF_00087"/>
    </source>
</evidence>
<gene>
    <name evidence="1" type="primary">hemA</name>
    <name type="ordered locus">Rfer_1281</name>
</gene>